<keyword id="KW-0008">Acetylcholine receptor inhibiting toxin</keyword>
<keyword id="KW-0903">Direct protein sequencing</keyword>
<keyword id="KW-1015">Disulfide bond</keyword>
<keyword id="KW-0872">Ion channel impairing toxin</keyword>
<keyword id="KW-0528">Neurotoxin</keyword>
<keyword id="KW-0629">Postsynaptic neurotoxin</keyword>
<keyword id="KW-0964">Secreted</keyword>
<keyword id="KW-0800">Toxin</keyword>
<evidence type="ECO:0000250" key="1">
    <source>
        <dbReference type="UniProtKB" id="P81783"/>
    </source>
</evidence>
<evidence type="ECO:0000250" key="2">
    <source>
        <dbReference type="UniProtKB" id="P86099"/>
    </source>
</evidence>
<evidence type="ECO:0000269" key="3">
    <source>
    </source>
</evidence>
<evidence type="ECO:0000303" key="4">
    <source>
    </source>
</evidence>
<evidence type="ECO:0000305" key="5"/>
<accession>P86424</accession>
<dbReference type="SMR" id="P86424"/>
<dbReference type="GO" id="GO:0005576">
    <property type="term" value="C:extracellular region"/>
    <property type="evidence" value="ECO:0007669"/>
    <property type="project" value="UniProtKB-SubCell"/>
</dbReference>
<dbReference type="GO" id="GO:0030550">
    <property type="term" value="F:acetylcholine receptor inhibitor activity"/>
    <property type="evidence" value="ECO:0007669"/>
    <property type="project" value="UniProtKB-KW"/>
</dbReference>
<dbReference type="GO" id="GO:0099106">
    <property type="term" value="F:ion channel regulator activity"/>
    <property type="evidence" value="ECO:0007669"/>
    <property type="project" value="UniProtKB-KW"/>
</dbReference>
<dbReference type="GO" id="GO:0090729">
    <property type="term" value="F:toxin activity"/>
    <property type="evidence" value="ECO:0007669"/>
    <property type="project" value="UniProtKB-KW"/>
</dbReference>
<dbReference type="CDD" id="cd00206">
    <property type="entry name" value="TFP_snake_toxin"/>
    <property type="match status" value="1"/>
</dbReference>
<dbReference type="FunFam" id="2.10.60.10:FF:000024">
    <property type="entry name" value="Cytotoxin 1"/>
    <property type="match status" value="1"/>
</dbReference>
<dbReference type="Gene3D" id="2.10.60.10">
    <property type="entry name" value="CD59"/>
    <property type="match status" value="1"/>
</dbReference>
<dbReference type="InterPro" id="IPR003571">
    <property type="entry name" value="Snake_3FTx"/>
</dbReference>
<dbReference type="InterPro" id="IPR045860">
    <property type="entry name" value="Snake_toxin-like_sf"/>
</dbReference>
<dbReference type="InterPro" id="IPR054131">
    <property type="entry name" value="Toxin_cobra-type"/>
</dbReference>
<dbReference type="Pfam" id="PF21947">
    <property type="entry name" value="Toxin_cobra-type"/>
    <property type="match status" value="1"/>
</dbReference>
<dbReference type="SUPFAM" id="SSF57302">
    <property type="entry name" value="Snake toxin-like"/>
    <property type="match status" value="1"/>
</dbReference>
<reference key="1">
    <citation type="journal article" date="2010" name="Toxicon">
        <title>Frontoxins, three-finger toxins from Micrurus frontalis venom, decrease miniature endplate potential amplitude at frog neuromuscular junction.</title>
        <authorList>
            <person name="Moreira K.G."/>
            <person name="Prates M.V."/>
            <person name="Andrade F.A."/>
            <person name="Silva L.P."/>
            <person name="Beirao P.S."/>
            <person name="Kushmerick C."/>
            <person name="Naves L.A."/>
            <person name="Bloch C. Jr."/>
        </authorList>
    </citation>
    <scope>PROTEIN SEQUENCE</scope>
    <scope>SUBCELLULAR LOCATION</scope>
    <scope>MASS SPECTROMETRY</scope>
    <source>
        <tissue>Venom</tissue>
    </source>
</reference>
<organism>
    <name type="scientific">Micrurus frontalis</name>
    <name type="common">Coral snake</name>
    <dbReference type="NCBI Taxonomy" id="129461"/>
    <lineage>
        <taxon>Eukaryota</taxon>
        <taxon>Metazoa</taxon>
        <taxon>Chordata</taxon>
        <taxon>Craniata</taxon>
        <taxon>Vertebrata</taxon>
        <taxon>Euteleostomi</taxon>
        <taxon>Lepidosauria</taxon>
        <taxon>Squamata</taxon>
        <taxon>Bifurcata</taxon>
        <taxon>Unidentata</taxon>
        <taxon>Episquamata</taxon>
        <taxon>Toxicofera</taxon>
        <taxon>Serpentes</taxon>
        <taxon>Colubroidea</taxon>
        <taxon>Elapidae</taxon>
        <taxon>Elapinae</taxon>
        <taxon>Micrurus</taxon>
    </lineage>
</organism>
<sequence>LTCNTCAFKTCANSETCAAGKNICYQRKWNEHHGERIERKCVANCPELGSHDTSLLCCRIPDCN</sequence>
<proteinExistence type="evidence at protein level"/>
<comment type="function">
    <text evidence="2">Produces peripheral paralysis by blocking neuromuscular transmission at the postsynaptic site. Binds to the muscular nicotinic acetylcholine receptor (nAChR).</text>
</comment>
<comment type="subcellular location">
    <subcellularLocation>
        <location evidence="3">Secreted</location>
    </subcellularLocation>
</comment>
<comment type="tissue specificity">
    <text evidence="5">Expressed by the venom gland.</text>
</comment>
<comment type="mass spectrometry"/>
<comment type="similarity">
    <text evidence="5">Belongs to the three-finger toxin family. Ancestral subfamily.</text>
</comment>
<name>3NX5_MICFR</name>
<feature type="chain" id="PRO_0000394463" description="Frontoxin V" evidence="3">
    <location>
        <begin position="1"/>
        <end position="64"/>
    </location>
</feature>
<feature type="disulfide bond" evidence="1">
    <location>
        <begin position="3"/>
        <end position="24"/>
    </location>
</feature>
<feature type="disulfide bond" evidence="1">
    <location>
        <begin position="6"/>
        <end position="11"/>
    </location>
</feature>
<feature type="disulfide bond" evidence="1">
    <location>
        <begin position="17"/>
        <end position="41"/>
    </location>
</feature>
<feature type="disulfide bond" evidence="1">
    <location>
        <begin position="45"/>
        <end position="57"/>
    </location>
</feature>
<feature type="disulfide bond" evidence="1">
    <location>
        <begin position="58"/>
        <end position="63"/>
    </location>
</feature>
<protein>
    <recommendedName>
        <fullName evidence="4">Frontoxin V</fullName>
        <shortName evidence="4">FTx V</shortName>
    </recommendedName>
</protein>